<sequence>MENYSSLLIGGKQFSSRLMVGTGKYKSTQDMVASLSNSETEIITVAVRRIKNDQTGENLLEKINWEKYWMLPNTAGCVNSDEAVRIAILGRELAKLSGQEENNFVKLEVIPDKKYLLPDPIETLKAAEILIKKGFAVLPYINADPILAKRLEEIGCATVMPLGSPIGSGQGLLNLSNIRIIIENSKVPVIIDAGIGVPSEASQAMEIGADGVLINSAIAQAANPPLMAQAINYSVKAGRQAFLAGRIKKQDFAVASSPEKNISI</sequence>
<evidence type="ECO:0000255" key="1">
    <source>
        <dbReference type="HAMAP-Rule" id="MF_00443"/>
    </source>
</evidence>
<name>THIG_PROMS</name>
<proteinExistence type="inferred from homology"/>
<comment type="function">
    <text evidence="1">Catalyzes the rearrangement of 1-deoxy-D-xylulose 5-phosphate (DXP) to produce the thiazole phosphate moiety of thiamine. Sulfur is provided by the thiocarboxylate moiety of the carrier protein ThiS. In vitro, sulfur can be provided by H(2)S.</text>
</comment>
<comment type="catalytic activity">
    <reaction evidence="1">
        <text>[ThiS sulfur-carrier protein]-C-terminal-Gly-aminoethanethioate + 2-iminoacetate + 1-deoxy-D-xylulose 5-phosphate = [ThiS sulfur-carrier protein]-C-terminal Gly-Gly + 2-[(2R,5Z)-2-carboxy-4-methylthiazol-5(2H)-ylidene]ethyl phosphate + 2 H2O + H(+)</text>
        <dbReference type="Rhea" id="RHEA:26297"/>
        <dbReference type="Rhea" id="RHEA-COMP:12909"/>
        <dbReference type="Rhea" id="RHEA-COMP:19908"/>
        <dbReference type="ChEBI" id="CHEBI:15377"/>
        <dbReference type="ChEBI" id="CHEBI:15378"/>
        <dbReference type="ChEBI" id="CHEBI:57792"/>
        <dbReference type="ChEBI" id="CHEBI:62899"/>
        <dbReference type="ChEBI" id="CHEBI:77846"/>
        <dbReference type="ChEBI" id="CHEBI:90778"/>
        <dbReference type="ChEBI" id="CHEBI:232372"/>
        <dbReference type="EC" id="2.8.1.10"/>
    </reaction>
</comment>
<comment type="pathway">
    <text evidence="1">Cofactor biosynthesis; thiamine diphosphate biosynthesis.</text>
</comment>
<comment type="subunit">
    <text evidence="1">Homotetramer. Forms heterodimers with either ThiH or ThiS.</text>
</comment>
<comment type="subcellular location">
    <subcellularLocation>
        <location evidence="1">Cytoplasm</location>
    </subcellularLocation>
</comment>
<comment type="similarity">
    <text evidence="1">Belongs to the ThiG family.</text>
</comment>
<dbReference type="EC" id="2.8.1.10" evidence="1"/>
<dbReference type="EMBL" id="CP000551">
    <property type="protein sequence ID" value="ABM71156.1"/>
    <property type="molecule type" value="Genomic_DNA"/>
</dbReference>
<dbReference type="RefSeq" id="WP_011819274.1">
    <property type="nucleotide sequence ID" value="NC_008816.1"/>
</dbReference>
<dbReference type="SMR" id="A2BTP5"/>
<dbReference type="STRING" id="146891.A9601_18731"/>
<dbReference type="KEGG" id="pmb:A9601_18731"/>
<dbReference type="eggNOG" id="COG2022">
    <property type="taxonomic scope" value="Bacteria"/>
</dbReference>
<dbReference type="HOGENOM" id="CLU_062233_1_0_3"/>
<dbReference type="OrthoDB" id="9805935at2"/>
<dbReference type="UniPathway" id="UPA00060"/>
<dbReference type="Proteomes" id="UP000002590">
    <property type="component" value="Chromosome"/>
</dbReference>
<dbReference type="GO" id="GO:0005737">
    <property type="term" value="C:cytoplasm"/>
    <property type="evidence" value="ECO:0007669"/>
    <property type="project" value="UniProtKB-SubCell"/>
</dbReference>
<dbReference type="GO" id="GO:1990107">
    <property type="term" value="F:thiazole synthase activity"/>
    <property type="evidence" value="ECO:0007669"/>
    <property type="project" value="UniProtKB-EC"/>
</dbReference>
<dbReference type="GO" id="GO:0009229">
    <property type="term" value="P:thiamine diphosphate biosynthetic process"/>
    <property type="evidence" value="ECO:0007669"/>
    <property type="project" value="UniProtKB-UniRule"/>
</dbReference>
<dbReference type="CDD" id="cd04728">
    <property type="entry name" value="ThiG"/>
    <property type="match status" value="1"/>
</dbReference>
<dbReference type="Gene3D" id="3.20.20.70">
    <property type="entry name" value="Aldolase class I"/>
    <property type="match status" value="1"/>
</dbReference>
<dbReference type="HAMAP" id="MF_00443">
    <property type="entry name" value="ThiG"/>
    <property type="match status" value="1"/>
</dbReference>
<dbReference type="InterPro" id="IPR013785">
    <property type="entry name" value="Aldolase_TIM"/>
</dbReference>
<dbReference type="InterPro" id="IPR033983">
    <property type="entry name" value="Thiazole_synthase_ThiG"/>
</dbReference>
<dbReference type="InterPro" id="IPR008867">
    <property type="entry name" value="ThiG"/>
</dbReference>
<dbReference type="PANTHER" id="PTHR34266">
    <property type="entry name" value="THIAZOLE SYNTHASE"/>
    <property type="match status" value="1"/>
</dbReference>
<dbReference type="PANTHER" id="PTHR34266:SF2">
    <property type="entry name" value="THIAZOLE SYNTHASE"/>
    <property type="match status" value="1"/>
</dbReference>
<dbReference type="Pfam" id="PF05690">
    <property type="entry name" value="ThiG"/>
    <property type="match status" value="1"/>
</dbReference>
<dbReference type="SUPFAM" id="SSF110399">
    <property type="entry name" value="ThiG-like"/>
    <property type="match status" value="1"/>
</dbReference>
<keyword id="KW-0963">Cytoplasm</keyword>
<keyword id="KW-0704">Schiff base</keyword>
<keyword id="KW-0784">Thiamine biosynthesis</keyword>
<keyword id="KW-0808">Transferase</keyword>
<reference key="1">
    <citation type="journal article" date="2007" name="PLoS Genet.">
        <title>Patterns and implications of gene gain and loss in the evolution of Prochlorococcus.</title>
        <authorList>
            <person name="Kettler G.C."/>
            <person name="Martiny A.C."/>
            <person name="Huang K."/>
            <person name="Zucker J."/>
            <person name="Coleman M.L."/>
            <person name="Rodrigue S."/>
            <person name="Chen F."/>
            <person name="Lapidus A."/>
            <person name="Ferriera S."/>
            <person name="Johnson J."/>
            <person name="Steglich C."/>
            <person name="Church G.M."/>
            <person name="Richardson P."/>
            <person name="Chisholm S.W."/>
        </authorList>
    </citation>
    <scope>NUCLEOTIDE SEQUENCE [LARGE SCALE GENOMIC DNA]</scope>
    <source>
        <strain>AS9601</strain>
    </source>
</reference>
<protein>
    <recommendedName>
        <fullName evidence="1">Thiazole synthase</fullName>
        <ecNumber evidence="1">2.8.1.10</ecNumber>
    </recommendedName>
</protein>
<organism>
    <name type="scientific">Prochlorococcus marinus (strain AS9601)</name>
    <dbReference type="NCBI Taxonomy" id="146891"/>
    <lineage>
        <taxon>Bacteria</taxon>
        <taxon>Bacillati</taxon>
        <taxon>Cyanobacteriota</taxon>
        <taxon>Cyanophyceae</taxon>
        <taxon>Synechococcales</taxon>
        <taxon>Prochlorococcaceae</taxon>
        <taxon>Prochlorococcus</taxon>
    </lineage>
</organism>
<accession>A2BTP5</accession>
<gene>
    <name evidence="1" type="primary">thiG</name>
    <name type="ordered locus">A9601_18731</name>
</gene>
<feature type="chain" id="PRO_1000026025" description="Thiazole synthase">
    <location>
        <begin position="1"/>
        <end position="264"/>
    </location>
</feature>
<feature type="active site" description="Schiff-base intermediate with DXP" evidence="1">
    <location>
        <position position="106"/>
    </location>
</feature>
<feature type="binding site" evidence="1">
    <location>
        <position position="167"/>
    </location>
    <ligand>
        <name>1-deoxy-D-xylulose 5-phosphate</name>
        <dbReference type="ChEBI" id="CHEBI:57792"/>
    </ligand>
</feature>
<feature type="binding site" evidence="1">
    <location>
        <begin position="193"/>
        <end position="194"/>
    </location>
    <ligand>
        <name>1-deoxy-D-xylulose 5-phosphate</name>
        <dbReference type="ChEBI" id="CHEBI:57792"/>
    </ligand>
</feature>
<feature type="binding site" evidence="1">
    <location>
        <begin position="215"/>
        <end position="216"/>
    </location>
    <ligand>
        <name>1-deoxy-D-xylulose 5-phosphate</name>
        <dbReference type="ChEBI" id="CHEBI:57792"/>
    </ligand>
</feature>